<reference key="1">
    <citation type="submission" date="2007-12" db="EMBL/GenBank/DDBJ databases">
        <title>Complete sequence of Methylobacterium extorquens PA1.</title>
        <authorList>
            <consortium name="US DOE Joint Genome Institute"/>
            <person name="Copeland A."/>
            <person name="Lucas S."/>
            <person name="Lapidus A."/>
            <person name="Barry K."/>
            <person name="Glavina del Rio T."/>
            <person name="Dalin E."/>
            <person name="Tice H."/>
            <person name="Pitluck S."/>
            <person name="Saunders E."/>
            <person name="Brettin T."/>
            <person name="Bruce D."/>
            <person name="Detter J.C."/>
            <person name="Han C."/>
            <person name="Schmutz J."/>
            <person name="Larimer F."/>
            <person name="Land M."/>
            <person name="Hauser L."/>
            <person name="Kyrpides N."/>
            <person name="Kim E."/>
            <person name="Marx C."/>
            <person name="Richardson P."/>
        </authorList>
    </citation>
    <scope>NUCLEOTIDE SEQUENCE [LARGE SCALE GENOMIC DNA]</scope>
    <source>
        <strain>PA1</strain>
    </source>
</reference>
<comment type="function">
    <text evidence="1">The RuvA-RuvB-RuvC complex processes Holliday junction (HJ) DNA during genetic recombination and DNA repair, while the RuvA-RuvB complex plays an important role in the rescue of blocked DNA replication forks via replication fork reversal (RFR). RuvA specifically binds to HJ cruciform DNA, conferring on it an open structure. The RuvB hexamer acts as an ATP-dependent pump, pulling dsDNA into and through the RuvAB complex. HJ branch migration allows RuvC to scan DNA until it finds its consensus sequence, where it cleaves and resolves the cruciform DNA.</text>
</comment>
<comment type="subunit">
    <text evidence="1">Homotetramer. Forms an RuvA(8)-RuvB(12)-Holliday junction (HJ) complex. HJ DNA is sandwiched between 2 RuvA tetramers; dsDNA enters through RuvA and exits via RuvB. An RuvB hexamer assembles on each DNA strand where it exits the tetramer. Each RuvB hexamer is contacted by two RuvA subunits (via domain III) on 2 adjacent RuvB subunits; this complex drives branch migration. In the full resolvosome a probable DNA-RuvA(4)-RuvB(12)-RuvC(2) complex forms which resolves the HJ.</text>
</comment>
<comment type="subcellular location">
    <subcellularLocation>
        <location evidence="1">Cytoplasm</location>
    </subcellularLocation>
</comment>
<comment type="domain">
    <text evidence="1">Has three domains with a flexible linker between the domains II and III and assumes an 'L' shape. Domain III is highly mobile and contacts RuvB.</text>
</comment>
<comment type="similarity">
    <text evidence="1">Belongs to the RuvA family.</text>
</comment>
<feature type="chain" id="PRO_1000090336" description="Holliday junction branch migration complex subunit RuvA">
    <location>
        <begin position="1"/>
        <end position="208"/>
    </location>
</feature>
<feature type="region of interest" description="Domain I" evidence="1">
    <location>
        <begin position="1"/>
        <end position="64"/>
    </location>
</feature>
<feature type="region of interest" description="Domain II" evidence="1">
    <location>
        <begin position="65"/>
        <end position="143"/>
    </location>
</feature>
<feature type="region of interest" description="Flexible linker" evidence="1">
    <location>
        <begin position="144"/>
        <end position="152"/>
    </location>
</feature>
<feature type="region of interest" description="Domain III" evidence="1">
    <location>
        <begin position="153"/>
        <end position="208"/>
    </location>
</feature>
<accession>A9W1B3</accession>
<keyword id="KW-0963">Cytoplasm</keyword>
<keyword id="KW-0227">DNA damage</keyword>
<keyword id="KW-0233">DNA recombination</keyword>
<keyword id="KW-0234">DNA repair</keyword>
<keyword id="KW-0238">DNA-binding</keyword>
<name>RUVA_METEP</name>
<proteinExistence type="inferred from homology"/>
<organism>
    <name type="scientific">Methylorubrum extorquens (strain PA1)</name>
    <name type="common">Methylobacterium extorquens</name>
    <dbReference type="NCBI Taxonomy" id="419610"/>
    <lineage>
        <taxon>Bacteria</taxon>
        <taxon>Pseudomonadati</taxon>
        <taxon>Pseudomonadota</taxon>
        <taxon>Alphaproteobacteria</taxon>
        <taxon>Hyphomicrobiales</taxon>
        <taxon>Methylobacteriaceae</taxon>
        <taxon>Methylorubrum</taxon>
    </lineage>
</organism>
<evidence type="ECO:0000255" key="1">
    <source>
        <dbReference type="HAMAP-Rule" id="MF_00031"/>
    </source>
</evidence>
<sequence>MIGKLKGIVDSYGEDFVILDVNGVGYVVHCSARTLQRLPKPGEATDLAIETHVREDMIRLYGFRVDAEREWFRLLQTVQGVGTRVALGVLSVLEPAQLATAIATGDKGAVARAPGVGPRLAARLVAELKDKAPAFAPIDPALIALTGAVEDRTAPQPVADAISALVNLGYAQIQASAAIAAALKGLGEEAGTVEAKTLIRLGLRELAR</sequence>
<dbReference type="EMBL" id="CP000908">
    <property type="protein sequence ID" value="ABY29369.1"/>
    <property type="molecule type" value="Genomic_DNA"/>
</dbReference>
<dbReference type="RefSeq" id="WP_012252665.1">
    <property type="nucleotide sequence ID" value="NC_010172.1"/>
</dbReference>
<dbReference type="SMR" id="A9W1B3"/>
<dbReference type="KEGG" id="mex:Mext_0964"/>
<dbReference type="eggNOG" id="COG0632">
    <property type="taxonomic scope" value="Bacteria"/>
</dbReference>
<dbReference type="HOGENOM" id="CLU_087936_3_0_5"/>
<dbReference type="BioCyc" id="MEXT419610:MEXT_RS04790-MONOMER"/>
<dbReference type="GO" id="GO:0005737">
    <property type="term" value="C:cytoplasm"/>
    <property type="evidence" value="ECO:0007669"/>
    <property type="project" value="UniProtKB-SubCell"/>
</dbReference>
<dbReference type="GO" id="GO:0009379">
    <property type="term" value="C:Holliday junction helicase complex"/>
    <property type="evidence" value="ECO:0007669"/>
    <property type="project" value="InterPro"/>
</dbReference>
<dbReference type="GO" id="GO:0048476">
    <property type="term" value="C:Holliday junction resolvase complex"/>
    <property type="evidence" value="ECO:0007669"/>
    <property type="project" value="UniProtKB-UniRule"/>
</dbReference>
<dbReference type="GO" id="GO:0005524">
    <property type="term" value="F:ATP binding"/>
    <property type="evidence" value="ECO:0007669"/>
    <property type="project" value="InterPro"/>
</dbReference>
<dbReference type="GO" id="GO:0000400">
    <property type="term" value="F:four-way junction DNA binding"/>
    <property type="evidence" value="ECO:0007669"/>
    <property type="project" value="UniProtKB-UniRule"/>
</dbReference>
<dbReference type="GO" id="GO:0009378">
    <property type="term" value="F:four-way junction helicase activity"/>
    <property type="evidence" value="ECO:0007669"/>
    <property type="project" value="InterPro"/>
</dbReference>
<dbReference type="GO" id="GO:0006310">
    <property type="term" value="P:DNA recombination"/>
    <property type="evidence" value="ECO:0007669"/>
    <property type="project" value="UniProtKB-UniRule"/>
</dbReference>
<dbReference type="GO" id="GO:0006281">
    <property type="term" value="P:DNA repair"/>
    <property type="evidence" value="ECO:0007669"/>
    <property type="project" value="UniProtKB-UniRule"/>
</dbReference>
<dbReference type="Gene3D" id="1.10.150.20">
    <property type="entry name" value="5' to 3' exonuclease, C-terminal subdomain"/>
    <property type="match status" value="1"/>
</dbReference>
<dbReference type="Gene3D" id="1.10.8.10">
    <property type="entry name" value="DNA helicase RuvA subunit, C-terminal domain"/>
    <property type="match status" value="1"/>
</dbReference>
<dbReference type="Gene3D" id="2.40.50.140">
    <property type="entry name" value="Nucleic acid-binding proteins"/>
    <property type="match status" value="1"/>
</dbReference>
<dbReference type="HAMAP" id="MF_00031">
    <property type="entry name" value="DNA_HJ_migration_RuvA"/>
    <property type="match status" value="1"/>
</dbReference>
<dbReference type="InterPro" id="IPR013849">
    <property type="entry name" value="DNA_helicase_Holl-junc_RuvA_I"/>
</dbReference>
<dbReference type="InterPro" id="IPR012340">
    <property type="entry name" value="NA-bd_OB-fold"/>
</dbReference>
<dbReference type="InterPro" id="IPR000085">
    <property type="entry name" value="RuvA"/>
</dbReference>
<dbReference type="InterPro" id="IPR010994">
    <property type="entry name" value="RuvA_2-like"/>
</dbReference>
<dbReference type="InterPro" id="IPR011114">
    <property type="entry name" value="RuvA_C"/>
</dbReference>
<dbReference type="InterPro" id="IPR036267">
    <property type="entry name" value="RuvA_C_sf"/>
</dbReference>
<dbReference type="NCBIfam" id="TIGR00084">
    <property type="entry name" value="ruvA"/>
    <property type="match status" value="1"/>
</dbReference>
<dbReference type="Pfam" id="PF14520">
    <property type="entry name" value="HHH_5"/>
    <property type="match status" value="1"/>
</dbReference>
<dbReference type="Pfam" id="PF07499">
    <property type="entry name" value="RuvA_C"/>
    <property type="match status" value="1"/>
</dbReference>
<dbReference type="Pfam" id="PF01330">
    <property type="entry name" value="RuvA_N"/>
    <property type="match status" value="1"/>
</dbReference>
<dbReference type="SUPFAM" id="SSF46929">
    <property type="entry name" value="DNA helicase RuvA subunit, C-terminal domain"/>
    <property type="match status" value="1"/>
</dbReference>
<dbReference type="SUPFAM" id="SSF50249">
    <property type="entry name" value="Nucleic acid-binding proteins"/>
    <property type="match status" value="1"/>
</dbReference>
<dbReference type="SUPFAM" id="SSF47781">
    <property type="entry name" value="RuvA domain 2-like"/>
    <property type="match status" value="1"/>
</dbReference>
<gene>
    <name evidence="1" type="primary">ruvA</name>
    <name type="ordered locus">Mext_0964</name>
</gene>
<protein>
    <recommendedName>
        <fullName evidence="1">Holliday junction branch migration complex subunit RuvA</fullName>
    </recommendedName>
</protein>